<feature type="chain" id="PRO_1000194042" description="Large ribosomal subunit protein uL29">
    <location>
        <begin position="1"/>
        <end position="63"/>
    </location>
</feature>
<sequence>MKAQDLREKSVEELNSELLNLLKEQFNLRMQAATGQLQQTHTLKAVRRDIARVKTVLTEKAGA</sequence>
<comment type="similarity">
    <text evidence="1">Belongs to the universal ribosomal protein uL29 family.</text>
</comment>
<organism>
    <name type="scientific">Vibrio cholerae serotype O1 (strain M66-2)</name>
    <dbReference type="NCBI Taxonomy" id="579112"/>
    <lineage>
        <taxon>Bacteria</taxon>
        <taxon>Pseudomonadati</taxon>
        <taxon>Pseudomonadota</taxon>
        <taxon>Gammaproteobacteria</taxon>
        <taxon>Vibrionales</taxon>
        <taxon>Vibrionaceae</taxon>
        <taxon>Vibrio</taxon>
    </lineage>
</organism>
<protein>
    <recommendedName>
        <fullName evidence="1">Large ribosomal subunit protein uL29</fullName>
    </recommendedName>
    <alternativeName>
        <fullName evidence="2">50S ribosomal protein L29</fullName>
    </alternativeName>
</protein>
<keyword id="KW-0687">Ribonucleoprotein</keyword>
<keyword id="KW-0689">Ribosomal protein</keyword>
<reference key="1">
    <citation type="journal article" date="2008" name="PLoS ONE">
        <title>A recalibrated molecular clock and independent origins for the cholera pandemic clones.</title>
        <authorList>
            <person name="Feng L."/>
            <person name="Reeves P.R."/>
            <person name="Lan R."/>
            <person name="Ren Y."/>
            <person name="Gao C."/>
            <person name="Zhou Z."/>
            <person name="Ren Y."/>
            <person name="Cheng J."/>
            <person name="Wang W."/>
            <person name="Wang J."/>
            <person name="Qian W."/>
            <person name="Li D."/>
            <person name="Wang L."/>
        </authorList>
    </citation>
    <scope>NUCLEOTIDE SEQUENCE [LARGE SCALE GENOMIC DNA]</scope>
    <source>
        <strain>M66-2</strain>
    </source>
</reference>
<gene>
    <name evidence="1" type="primary">rpmC</name>
    <name type="ordered locus">VCM66_2508</name>
</gene>
<name>RL29_VIBCM</name>
<accession>C3LRQ0</accession>
<dbReference type="EMBL" id="CP001233">
    <property type="protein sequence ID" value="ACP06805.1"/>
    <property type="molecule type" value="Genomic_DNA"/>
</dbReference>
<dbReference type="RefSeq" id="WP_000647192.1">
    <property type="nucleotide sequence ID" value="NC_012578.1"/>
</dbReference>
<dbReference type="SMR" id="C3LRQ0"/>
<dbReference type="GeneID" id="94012760"/>
<dbReference type="KEGG" id="vcm:VCM66_2508"/>
<dbReference type="HOGENOM" id="CLU_158491_1_2_6"/>
<dbReference type="Proteomes" id="UP000001217">
    <property type="component" value="Chromosome I"/>
</dbReference>
<dbReference type="GO" id="GO:0022625">
    <property type="term" value="C:cytosolic large ribosomal subunit"/>
    <property type="evidence" value="ECO:0007669"/>
    <property type="project" value="TreeGrafter"/>
</dbReference>
<dbReference type="GO" id="GO:0003735">
    <property type="term" value="F:structural constituent of ribosome"/>
    <property type="evidence" value="ECO:0007669"/>
    <property type="project" value="InterPro"/>
</dbReference>
<dbReference type="GO" id="GO:0006412">
    <property type="term" value="P:translation"/>
    <property type="evidence" value="ECO:0007669"/>
    <property type="project" value="UniProtKB-UniRule"/>
</dbReference>
<dbReference type="CDD" id="cd00427">
    <property type="entry name" value="Ribosomal_L29_HIP"/>
    <property type="match status" value="1"/>
</dbReference>
<dbReference type="FunFam" id="1.10.287.310:FF:000001">
    <property type="entry name" value="50S ribosomal protein L29"/>
    <property type="match status" value="1"/>
</dbReference>
<dbReference type="Gene3D" id="1.10.287.310">
    <property type="match status" value="1"/>
</dbReference>
<dbReference type="HAMAP" id="MF_00374">
    <property type="entry name" value="Ribosomal_uL29"/>
    <property type="match status" value="1"/>
</dbReference>
<dbReference type="InterPro" id="IPR050063">
    <property type="entry name" value="Ribosomal_protein_uL29"/>
</dbReference>
<dbReference type="InterPro" id="IPR001854">
    <property type="entry name" value="Ribosomal_uL29"/>
</dbReference>
<dbReference type="InterPro" id="IPR018254">
    <property type="entry name" value="Ribosomal_uL29_CS"/>
</dbReference>
<dbReference type="InterPro" id="IPR036049">
    <property type="entry name" value="Ribosomal_uL29_sf"/>
</dbReference>
<dbReference type="NCBIfam" id="TIGR00012">
    <property type="entry name" value="L29"/>
    <property type="match status" value="1"/>
</dbReference>
<dbReference type="PANTHER" id="PTHR10916">
    <property type="entry name" value="60S RIBOSOMAL PROTEIN L35/50S RIBOSOMAL PROTEIN L29"/>
    <property type="match status" value="1"/>
</dbReference>
<dbReference type="PANTHER" id="PTHR10916:SF0">
    <property type="entry name" value="LARGE RIBOSOMAL SUBUNIT PROTEIN UL29C"/>
    <property type="match status" value="1"/>
</dbReference>
<dbReference type="Pfam" id="PF00831">
    <property type="entry name" value="Ribosomal_L29"/>
    <property type="match status" value="1"/>
</dbReference>
<dbReference type="SUPFAM" id="SSF46561">
    <property type="entry name" value="Ribosomal protein L29 (L29p)"/>
    <property type="match status" value="1"/>
</dbReference>
<dbReference type="PROSITE" id="PS00579">
    <property type="entry name" value="RIBOSOMAL_L29"/>
    <property type="match status" value="1"/>
</dbReference>
<proteinExistence type="inferred from homology"/>
<evidence type="ECO:0000255" key="1">
    <source>
        <dbReference type="HAMAP-Rule" id="MF_00374"/>
    </source>
</evidence>
<evidence type="ECO:0000305" key="2"/>